<organism>
    <name type="scientific">Bacillus cereus (strain B4264)</name>
    <dbReference type="NCBI Taxonomy" id="405532"/>
    <lineage>
        <taxon>Bacteria</taxon>
        <taxon>Bacillati</taxon>
        <taxon>Bacillota</taxon>
        <taxon>Bacilli</taxon>
        <taxon>Bacillales</taxon>
        <taxon>Bacillaceae</taxon>
        <taxon>Bacillus</taxon>
        <taxon>Bacillus cereus group</taxon>
    </lineage>
</organism>
<accession>B7H6W3</accession>
<dbReference type="EC" id="2.7.7.6" evidence="1"/>
<dbReference type="EMBL" id="CP001176">
    <property type="protein sequence ID" value="ACK60237.1"/>
    <property type="molecule type" value="Genomic_DNA"/>
</dbReference>
<dbReference type="RefSeq" id="WP_000576435.1">
    <property type="nucleotide sequence ID" value="NZ_VEHB01000002.1"/>
</dbReference>
<dbReference type="SMR" id="B7H6W3"/>
<dbReference type="KEGG" id="bcb:BCB4264_A4079"/>
<dbReference type="HOGENOM" id="CLU_187518_0_0_9"/>
<dbReference type="Proteomes" id="UP000007096">
    <property type="component" value="Chromosome"/>
</dbReference>
<dbReference type="GO" id="GO:0000428">
    <property type="term" value="C:DNA-directed RNA polymerase complex"/>
    <property type="evidence" value="ECO:0007669"/>
    <property type="project" value="UniProtKB-KW"/>
</dbReference>
<dbReference type="GO" id="GO:0003677">
    <property type="term" value="F:DNA binding"/>
    <property type="evidence" value="ECO:0007669"/>
    <property type="project" value="UniProtKB-UniRule"/>
</dbReference>
<dbReference type="GO" id="GO:0003899">
    <property type="term" value="F:DNA-directed RNA polymerase activity"/>
    <property type="evidence" value="ECO:0007669"/>
    <property type="project" value="UniProtKB-UniRule"/>
</dbReference>
<dbReference type="GO" id="GO:0006351">
    <property type="term" value="P:DNA-templated transcription"/>
    <property type="evidence" value="ECO:0007669"/>
    <property type="project" value="UniProtKB-UniRule"/>
</dbReference>
<dbReference type="Gene3D" id="3.10.20.730">
    <property type="entry name" value="RNAP, epsilon subunit-like"/>
    <property type="match status" value="1"/>
</dbReference>
<dbReference type="HAMAP" id="MF_01553">
    <property type="entry name" value="RNApol_bact_RpoY"/>
    <property type="match status" value="1"/>
</dbReference>
<dbReference type="InterPro" id="IPR009907">
    <property type="entry name" value="RpoY"/>
</dbReference>
<dbReference type="NCBIfam" id="NF010188">
    <property type="entry name" value="PRK13667.1"/>
    <property type="match status" value="1"/>
</dbReference>
<dbReference type="Pfam" id="PF07288">
    <property type="entry name" value="RpoY"/>
    <property type="match status" value="1"/>
</dbReference>
<comment type="function">
    <text evidence="1">A non-essential component of RNA polymerase (RNAP).</text>
</comment>
<comment type="catalytic activity">
    <reaction evidence="1">
        <text>RNA(n) + a ribonucleoside 5'-triphosphate = RNA(n+1) + diphosphate</text>
        <dbReference type="Rhea" id="RHEA:21248"/>
        <dbReference type="Rhea" id="RHEA-COMP:14527"/>
        <dbReference type="Rhea" id="RHEA-COMP:17342"/>
        <dbReference type="ChEBI" id="CHEBI:33019"/>
        <dbReference type="ChEBI" id="CHEBI:61557"/>
        <dbReference type="ChEBI" id="CHEBI:140395"/>
        <dbReference type="EC" id="2.7.7.6"/>
    </reaction>
</comment>
<comment type="subunit">
    <text evidence="1">RNAP is composed of a core of 2 alpha, a beta and a beta' subunit. The core is associated with a delta subunit, and at least one of epsilon or omega. When a sigma factor is associated with the core the holoenzyme is formed, which can initiate transcription.</text>
</comment>
<comment type="similarity">
    <text evidence="1">Belongs to the RNA polymerase subunit epsilon family.</text>
</comment>
<evidence type="ECO:0000255" key="1">
    <source>
        <dbReference type="HAMAP-Rule" id="MF_01553"/>
    </source>
</evidence>
<feature type="chain" id="PRO_1000199615" description="DNA-directed RNA polymerase subunit epsilon">
    <location>
        <begin position="1"/>
        <end position="70"/>
    </location>
</feature>
<reference key="1">
    <citation type="submission" date="2008-10" db="EMBL/GenBank/DDBJ databases">
        <title>Genome sequence of Bacillus cereus B4264.</title>
        <authorList>
            <person name="Dodson R.J."/>
            <person name="Durkin A.S."/>
            <person name="Rosovitz M.J."/>
            <person name="Rasko D.A."/>
            <person name="Hoffmaster A."/>
            <person name="Ravel J."/>
            <person name="Sutton G."/>
        </authorList>
    </citation>
    <scope>NUCLEOTIDE SEQUENCE [LARGE SCALE GENOMIC DNA]</scope>
    <source>
        <strain>B4264</strain>
    </source>
</reference>
<sequence length="70" mass="8186">MIFKVFYQEKLTEVPVRENTKVLYLEATSEKDVRTKLNKFAYNIEFVQSVTGAHLEYEKENADLTLAEIV</sequence>
<keyword id="KW-0240">DNA-directed RNA polymerase</keyword>
<keyword id="KW-0548">Nucleotidyltransferase</keyword>
<keyword id="KW-0804">Transcription</keyword>
<keyword id="KW-0808">Transferase</keyword>
<gene>
    <name evidence="1" type="primary">rpoY</name>
    <name type="ordered locus">BCB4264_A4079</name>
</gene>
<proteinExistence type="inferred from homology"/>
<protein>
    <recommendedName>
        <fullName evidence="1">DNA-directed RNA polymerase subunit epsilon</fullName>
        <shortName evidence="1">RNAP epsilon subunit</shortName>
        <ecNumber evidence="1">2.7.7.6</ecNumber>
    </recommendedName>
    <alternativeName>
        <fullName evidence="1">RNA polymerase epsilon subunit</fullName>
    </alternativeName>
    <alternativeName>
        <fullName evidence="1">Transcriptase subunit epsilon</fullName>
    </alternativeName>
</protein>
<name>RPOY_BACC4</name>